<accession>P67199</accession>
<accession>Q99TT3</accession>
<feature type="chain" id="PRO_0000196718" description="Putative pyruvate, phosphate dikinase regulatory protein">
    <location>
        <begin position="1"/>
        <end position="272"/>
    </location>
</feature>
<feature type="binding site" evidence="1">
    <location>
        <begin position="151"/>
        <end position="158"/>
    </location>
    <ligand>
        <name>ADP</name>
        <dbReference type="ChEBI" id="CHEBI:456216"/>
    </ligand>
</feature>
<dbReference type="EC" id="2.7.11.32" evidence="1"/>
<dbReference type="EC" id="2.7.4.27" evidence="1"/>
<dbReference type="EMBL" id="BA000017">
    <property type="protein sequence ID" value="BAB57725.1"/>
    <property type="molecule type" value="Genomic_DNA"/>
</dbReference>
<dbReference type="RefSeq" id="WP_000411298.1">
    <property type="nucleotide sequence ID" value="NC_002758.2"/>
</dbReference>
<dbReference type="SMR" id="P67199"/>
<dbReference type="KEGG" id="sav:SAV1563"/>
<dbReference type="HOGENOM" id="CLU_046206_2_1_9"/>
<dbReference type="PhylomeDB" id="P67199"/>
<dbReference type="Proteomes" id="UP000002481">
    <property type="component" value="Chromosome"/>
</dbReference>
<dbReference type="GO" id="GO:0043531">
    <property type="term" value="F:ADP binding"/>
    <property type="evidence" value="ECO:0007669"/>
    <property type="project" value="UniProtKB-UniRule"/>
</dbReference>
<dbReference type="GO" id="GO:0005524">
    <property type="term" value="F:ATP binding"/>
    <property type="evidence" value="ECO:0007669"/>
    <property type="project" value="InterPro"/>
</dbReference>
<dbReference type="GO" id="GO:0016776">
    <property type="term" value="F:phosphotransferase activity, phosphate group as acceptor"/>
    <property type="evidence" value="ECO:0007669"/>
    <property type="project" value="UniProtKB-UniRule"/>
</dbReference>
<dbReference type="GO" id="GO:0004674">
    <property type="term" value="F:protein serine/threonine kinase activity"/>
    <property type="evidence" value="ECO:0007669"/>
    <property type="project" value="UniProtKB-UniRule"/>
</dbReference>
<dbReference type="HAMAP" id="MF_00921">
    <property type="entry name" value="PDRP"/>
    <property type="match status" value="1"/>
</dbReference>
<dbReference type="InterPro" id="IPR005177">
    <property type="entry name" value="Kinase-pyrophosphorylase"/>
</dbReference>
<dbReference type="InterPro" id="IPR026565">
    <property type="entry name" value="PPDK_reg"/>
</dbReference>
<dbReference type="NCBIfam" id="NF003742">
    <property type="entry name" value="PRK05339.1"/>
    <property type="match status" value="1"/>
</dbReference>
<dbReference type="PANTHER" id="PTHR31756">
    <property type="entry name" value="PYRUVATE, PHOSPHATE DIKINASE REGULATORY PROTEIN 1, CHLOROPLASTIC"/>
    <property type="match status" value="1"/>
</dbReference>
<dbReference type="PANTHER" id="PTHR31756:SF3">
    <property type="entry name" value="PYRUVATE, PHOSPHATE DIKINASE REGULATORY PROTEIN 1, CHLOROPLASTIC"/>
    <property type="match status" value="1"/>
</dbReference>
<dbReference type="Pfam" id="PF03618">
    <property type="entry name" value="Kinase-PPPase"/>
    <property type="match status" value="1"/>
</dbReference>
<reference key="1">
    <citation type="journal article" date="2001" name="Lancet">
        <title>Whole genome sequencing of meticillin-resistant Staphylococcus aureus.</title>
        <authorList>
            <person name="Kuroda M."/>
            <person name="Ohta T."/>
            <person name="Uchiyama I."/>
            <person name="Baba T."/>
            <person name="Yuzawa H."/>
            <person name="Kobayashi I."/>
            <person name="Cui L."/>
            <person name="Oguchi A."/>
            <person name="Aoki K."/>
            <person name="Nagai Y."/>
            <person name="Lian J.-Q."/>
            <person name="Ito T."/>
            <person name="Kanamori M."/>
            <person name="Matsumaru H."/>
            <person name="Maruyama A."/>
            <person name="Murakami H."/>
            <person name="Hosoyama A."/>
            <person name="Mizutani-Ui Y."/>
            <person name="Takahashi N.K."/>
            <person name="Sawano T."/>
            <person name="Inoue R."/>
            <person name="Kaito C."/>
            <person name="Sekimizu K."/>
            <person name="Hirakawa H."/>
            <person name="Kuhara S."/>
            <person name="Goto S."/>
            <person name="Yabuzaki J."/>
            <person name="Kanehisa M."/>
            <person name="Yamashita A."/>
            <person name="Oshima K."/>
            <person name="Furuya K."/>
            <person name="Yoshino C."/>
            <person name="Shiba T."/>
            <person name="Hattori M."/>
            <person name="Ogasawara N."/>
            <person name="Hayashi H."/>
            <person name="Hiramatsu K."/>
        </authorList>
    </citation>
    <scope>NUCLEOTIDE SEQUENCE [LARGE SCALE GENOMIC DNA]</scope>
    <source>
        <strain>Mu50 / ATCC 700699</strain>
    </source>
</reference>
<organism>
    <name type="scientific">Staphylococcus aureus (strain Mu50 / ATCC 700699)</name>
    <dbReference type="NCBI Taxonomy" id="158878"/>
    <lineage>
        <taxon>Bacteria</taxon>
        <taxon>Bacillati</taxon>
        <taxon>Bacillota</taxon>
        <taxon>Bacilli</taxon>
        <taxon>Bacillales</taxon>
        <taxon>Staphylococcaceae</taxon>
        <taxon>Staphylococcus</taxon>
    </lineage>
</organism>
<sequence length="272" mass="30785">MEKIKIIVASDSIGETAELVARAGISQFNPKQCKNELLRYPYIESFEDVDEVIQVAKDTNAIIVYTLIKPEMKQYMSEKVAEFQLKSVDIMGPLMDLLSASVEEKPYNEPGIVHRLDDAYFKKIDAIEFAVKYDDGKDPKGLPKADIVLLGISRTSKTPLSQYLAHKSYKVMNVPIVPEVTPPDGLYDIDPKKCIALKISEEKLNRIRKERLKQLGLGDTARYATEARIQEELNYFEEIVSEIGCPVIDVSQKAIEETANDIIHYIEQNKSK</sequence>
<keyword id="KW-0418">Kinase</keyword>
<keyword id="KW-0547">Nucleotide-binding</keyword>
<keyword id="KW-0723">Serine/threonine-protein kinase</keyword>
<keyword id="KW-0808">Transferase</keyword>
<name>PDRP_STAAM</name>
<evidence type="ECO:0000255" key="1">
    <source>
        <dbReference type="HAMAP-Rule" id="MF_00921"/>
    </source>
</evidence>
<protein>
    <recommendedName>
        <fullName evidence="1">Putative pyruvate, phosphate dikinase regulatory protein</fullName>
        <shortName evidence="1">PPDK regulatory protein</shortName>
        <ecNumber evidence="1">2.7.11.32</ecNumber>
        <ecNumber evidence="1">2.7.4.27</ecNumber>
    </recommendedName>
</protein>
<proteinExistence type="inferred from homology"/>
<comment type="function">
    <text evidence="1">Bifunctional serine/threonine kinase and phosphorylase involved in the regulation of the pyruvate, phosphate dikinase (PPDK) by catalyzing its phosphorylation/dephosphorylation.</text>
</comment>
<comment type="catalytic activity">
    <reaction evidence="1">
        <text>N(tele)-phospho-L-histidyl/L-threonyl-[pyruvate, phosphate dikinase] + ADP = N(tele)-phospho-L-histidyl/O-phospho-L-threonyl-[pyruvate, phosphate dikinase] + AMP + H(+)</text>
        <dbReference type="Rhea" id="RHEA:43692"/>
        <dbReference type="Rhea" id="RHEA-COMP:10650"/>
        <dbReference type="Rhea" id="RHEA-COMP:10651"/>
        <dbReference type="ChEBI" id="CHEBI:15378"/>
        <dbReference type="ChEBI" id="CHEBI:30013"/>
        <dbReference type="ChEBI" id="CHEBI:61977"/>
        <dbReference type="ChEBI" id="CHEBI:83586"/>
        <dbReference type="ChEBI" id="CHEBI:456215"/>
        <dbReference type="ChEBI" id="CHEBI:456216"/>
        <dbReference type="EC" id="2.7.11.32"/>
    </reaction>
</comment>
<comment type="catalytic activity">
    <reaction evidence="1">
        <text>N(tele)-phospho-L-histidyl/O-phospho-L-threonyl-[pyruvate, phosphate dikinase] + phosphate + H(+) = N(tele)-phospho-L-histidyl/L-threonyl-[pyruvate, phosphate dikinase] + diphosphate</text>
        <dbReference type="Rhea" id="RHEA:43696"/>
        <dbReference type="Rhea" id="RHEA-COMP:10650"/>
        <dbReference type="Rhea" id="RHEA-COMP:10651"/>
        <dbReference type="ChEBI" id="CHEBI:15378"/>
        <dbReference type="ChEBI" id="CHEBI:30013"/>
        <dbReference type="ChEBI" id="CHEBI:33019"/>
        <dbReference type="ChEBI" id="CHEBI:43474"/>
        <dbReference type="ChEBI" id="CHEBI:61977"/>
        <dbReference type="ChEBI" id="CHEBI:83586"/>
        <dbReference type="EC" id="2.7.4.27"/>
    </reaction>
</comment>
<comment type="similarity">
    <text evidence="1">Belongs to the pyruvate, phosphate/water dikinase regulatory protein family. PDRP subfamily.</text>
</comment>
<gene>
    <name type="ordered locus">SAV1563</name>
</gene>